<sequence length="206" mass="23469">MARYLGPKLKLSRREGTDLFLKSGVRAIDTKCKIEQAPGQHGARKPRLSDYGVQLREKQKVRRIYGVLERQFRNYYKEAARLKGNTGENLLALLEGRLDNVVYRMGFGATRAEARQLVSHKAIMVNGRVVNIASYQVSPNDVVSIREKAKKQSRVKAALELAEQREKPTWLEVDAGKMEGTFKRKPERSDLSADINEHLIVELYSK</sequence>
<reference key="1">
    <citation type="journal article" date="2009" name="PLoS Genet.">
        <title>Organised genome dynamics in the Escherichia coli species results in highly diverse adaptive paths.</title>
        <authorList>
            <person name="Touchon M."/>
            <person name="Hoede C."/>
            <person name="Tenaillon O."/>
            <person name="Barbe V."/>
            <person name="Baeriswyl S."/>
            <person name="Bidet P."/>
            <person name="Bingen E."/>
            <person name="Bonacorsi S."/>
            <person name="Bouchier C."/>
            <person name="Bouvet O."/>
            <person name="Calteau A."/>
            <person name="Chiapello H."/>
            <person name="Clermont O."/>
            <person name="Cruveiller S."/>
            <person name="Danchin A."/>
            <person name="Diard M."/>
            <person name="Dossat C."/>
            <person name="Karoui M.E."/>
            <person name="Frapy E."/>
            <person name="Garry L."/>
            <person name="Ghigo J.M."/>
            <person name="Gilles A.M."/>
            <person name="Johnson J."/>
            <person name="Le Bouguenec C."/>
            <person name="Lescat M."/>
            <person name="Mangenot S."/>
            <person name="Martinez-Jehanne V."/>
            <person name="Matic I."/>
            <person name="Nassif X."/>
            <person name="Oztas S."/>
            <person name="Petit M.A."/>
            <person name="Pichon C."/>
            <person name="Rouy Z."/>
            <person name="Ruf C.S."/>
            <person name="Schneider D."/>
            <person name="Tourret J."/>
            <person name="Vacherie B."/>
            <person name="Vallenet D."/>
            <person name="Medigue C."/>
            <person name="Rocha E.P.C."/>
            <person name="Denamur E."/>
        </authorList>
    </citation>
    <scope>NUCLEOTIDE SEQUENCE [LARGE SCALE GENOMIC DNA]</scope>
    <source>
        <strain>55989 / EAEC</strain>
    </source>
</reference>
<keyword id="KW-1185">Reference proteome</keyword>
<keyword id="KW-0687">Ribonucleoprotein</keyword>
<keyword id="KW-0689">Ribosomal protein</keyword>
<keyword id="KW-0694">RNA-binding</keyword>
<keyword id="KW-0699">rRNA-binding</keyword>
<proteinExistence type="inferred from homology"/>
<feature type="chain" id="PRO_1000165402" description="Small ribosomal subunit protein uS4">
    <location>
        <begin position="1"/>
        <end position="206"/>
    </location>
</feature>
<feature type="domain" description="S4 RNA-binding" evidence="1">
    <location>
        <begin position="96"/>
        <end position="156"/>
    </location>
</feature>
<name>RS4_ECO55</name>
<comment type="function">
    <text evidence="1">One of the primary rRNA binding proteins, it binds directly to 16S rRNA where it nucleates assembly of the body of the 30S subunit.</text>
</comment>
<comment type="function">
    <text evidence="1">With S5 and S12 plays an important role in translational accuracy.</text>
</comment>
<comment type="subunit">
    <text evidence="1">Part of the 30S ribosomal subunit. Contacts protein S5. The interaction surface between S4 and S5 is involved in control of translational fidelity.</text>
</comment>
<comment type="similarity">
    <text evidence="1">Belongs to the universal ribosomal protein uS4 family.</text>
</comment>
<gene>
    <name evidence="1" type="primary">rpsD</name>
    <name type="ordered locus">EC55989_3713</name>
</gene>
<accession>B7LHZ8</accession>
<evidence type="ECO:0000255" key="1">
    <source>
        <dbReference type="HAMAP-Rule" id="MF_01306"/>
    </source>
</evidence>
<evidence type="ECO:0000305" key="2"/>
<protein>
    <recommendedName>
        <fullName evidence="1">Small ribosomal subunit protein uS4</fullName>
    </recommendedName>
    <alternativeName>
        <fullName evidence="2">30S ribosomal protein S4</fullName>
    </alternativeName>
</protein>
<dbReference type="EMBL" id="CU928145">
    <property type="protein sequence ID" value="CAU99998.1"/>
    <property type="molecule type" value="Genomic_DNA"/>
</dbReference>
<dbReference type="RefSeq" id="WP_000135224.1">
    <property type="nucleotide sequence ID" value="NZ_CP028304.1"/>
</dbReference>
<dbReference type="SMR" id="B7LHZ8"/>
<dbReference type="GeneID" id="93778691"/>
<dbReference type="KEGG" id="eck:EC55989_3713"/>
<dbReference type="HOGENOM" id="CLU_092403_0_2_6"/>
<dbReference type="Proteomes" id="UP000000746">
    <property type="component" value="Chromosome"/>
</dbReference>
<dbReference type="GO" id="GO:0015935">
    <property type="term" value="C:small ribosomal subunit"/>
    <property type="evidence" value="ECO:0007669"/>
    <property type="project" value="InterPro"/>
</dbReference>
<dbReference type="GO" id="GO:0019843">
    <property type="term" value="F:rRNA binding"/>
    <property type="evidence" value="ECO:0007669"/>
    <property type="project" value="UniProtKB-UniRule"/>
</dbReference>
<dbReference type="GO" id="GO:0003735">
    <property type="term" value="F:structural constituent of ribosome"/>
    <property type="evidence" value="ECO:0007669"/>
    <property type="project" value="InterPro"/>
</dbReference>
<dbReference type="GO" id="GO:0042274">
    <property type="term" value="P:ribosomal small subunit biogenesis"/>
    <property type="evidence" value="ECO:0007669"/>
    <property type="project" value="TreeGrafter"/>
</dbReference>
<dbReference type="GO" id="GO:0006412">
    <property type="term" value="P:translation"/>
    <property type="evidence" value="ECO:0007669"/>
    <property type="project" value="UniProtKB-UniRule"/>
</dbReference>
<dbReference type="CDD" id="cd00165">
    <property type="entry name" value="S4"/>
    <property type="match status" value="1"/>
</dbReference>
<dbReference type="FunFam" id="1.10.1050.10:FF:000001">
    <property type="entry name" value="30S ribosomal protein S4"/>
    <property type="match status" value="1"/>
</dbReference>
<dbReference type="FunFam" id="3.10.290.10:FF:000001">
    <property type="entry name" value="30S ribosomal protein S4"/>
    <property type="match status" value="1"/>
</dbReference>
<dbReference type="Gene3D" id="1.10.1050.10">
    <property type="entry name" value="Ribosomal Protein S4 Delta 41, Chain A, domain 1"/>
    <property type="match status" value="1"/>
</dbReference>
<dbReference type="Gene3D" id="3.10.290.10">
    <property type="entry name" value="RNA-binding S4 domain"/>
    <property type="match status" value="1"/>
</dbReference>
<dbReference type="HAMAP" id="MF_01306_B">
    <property type="entry name" value="Ribosomal_uS4_B"/>
    <property type="match status" value="1"/>
</dbReference>
<dbReference type="InterPro" id="IPR022801">
    <property type="entry name" value="Ribosomal_uS4"/>
</dbReference>
<dbReference type="InterPro" id="IPR005709">
    <property type="entry name" value="Ribosomal_uS4_bac-type"/>
</dbReference>
<dbReference type="InterPro" id="IPR018079">
    <property type="entry name" value="Ribosomal_uS4_CS"/>
</dbReference>
<dbReference type="InterPro" id="IPR001912">
    <property type="entry name" value="Ribosomal_uS4_N"/>
</dbReference>
<dbReference type="InterPro" id="IPR002942">
    <property type="entry name" value="S4_RNA-bd"/>
</dbReference>
<dbReference type="InterPro" id="IPR036986">
    <property type="entry name" value="S4_RNA-bd_sf"/>
</dbReference>
<dbReference type="NCBIfam" id="NF003717">
    <property type="entry name" value="PRK05327.1"/>
    <property type="match status" value="1"/>
</dbReference>
<dbReference type="NCBIfam" id="TIGR01017">
    <property type="entry name" value="rpsD_bact"/>
    <property type="match status" value="1"/>
</dbReference>
<dbReference type="PANTHER" id="PTHR11831">
    <property type="entry name" value="30S 40S RIBOSOMAL PROTEIN"/>
    <property type="match status" value="1"/>
</dbReference>
<dbReference type="PANTHER" id="PTHR11831:SF4">
    <property type="entry name" value="SMALL RIBOSOMAL SUBUNIT PROTEIN US4M"/>
    <property type="match status" value="1"/>
</dbReference>
<dbReference type="Pfam" id="PF00163">
    <property type="entry name" value="Ribosomal_S4"/>
    <property type="match status" value="1"/>
</dbReference>
<dbReference type="Pfam" id="PF01479">
    <property type="entry name" value="S4"/>
    <property type="match status" value="1"/>
</dbReference>
<dbReference type="SMART" id="SM01390">
    <property type="entry name" value="Ribosomal_S4"/>
    <property type="match status" value="1"/>
</dbReference>
<dbReference type="SMART" id="SM00363">
    <property type="entry name" value="S4"/>
    <property type="match status" value="1"/>
</dbReference>
<dbReference type="SUPFAM" id="SSF55174">
    <property type="entry name" value="Alpha-L RNA-binding motif"/>
    <property type="match status" value="1"/>
</dbReference>
<dbReference type="PROSITE" id="PS00632">
    <property type="entry name" value="RIBOSOMAL_S4"/>
    <property type="match status" value="1"/>
</dbReference>
<dbReference type="PROSITE" id="PS50889">
    <property type="entry name" value="S4"/>
    <property type="match status" value="1"/>
</dbReference>
<organism>
    <name type="scientific">Escherichia coli (strain 55989 / EAEC)</name>
    <dbReference type="NCBI Taxonomy" id="585055"/>
    <lineage>
        <taxon>Bacteria</taxon>
        <taxon>Pseudomonadati</taxon>
        <taxon>Pseudomonadota</taxon>
        <taxon>Gammaproteobacteria</taxon>
        <taxon>Enterobacterales</taxon>
        <taxon>Enterobacteriaceae</taxon>
        <taxon>Escherichia</taxon>
    </lineage>
</organism>